<gene>
    <name evidence="6" type="primary">sphD</name>
    <name type="ORF">AFUB_034500</name>
</gene>
<accession>B0XZV4</accession>
<reference key="1">
    <citation type="journal article" date="2008" name="PLoS Genet.">
        <title>Genomic islands in the pathogenic filamentous fungus Aspergillus fumigatus.</title>
        <authorList>
            <person name="Fedorova N.D."/>
            <person name="Khaldi N."/>
            <person name="Joardar V.S."/>
            <person name="Maiti R."/>
            <person name="Amedeo P."/>
            <person name="Anderson M.J."/>
            <person name="Crabtree J."/>
            <person name="Silva J.C."/>
            <person name="Badger J.H."/>
            <person name="Albarraq A."/>
            <person name="Angiuoli S."/>
            <person name="Bussey H."/>
            <person name="Bowyer P."/>
            <person name="Cotty P.J."/>
            <person name="Dyer P.S."/>
            <person name="Egan A."/>
            <person name="Galens K."/>
            <person name="Fraser-Liggett C.M."/>
            <person name="Haas B.J."/>
            <person name="Inman J.M."/>
            <person name="Kent R."/>
            <person name="Lemieux S."/>
            <person name="Malavazi I."/>
            <person name="Orvis J."/>
            <person name="Roemer T."/>
            <person name="Ronning C.M."/>
            <person name="Sundaram J.P."/>
            <person name="Sutton G."/>
            <person name="Turner G."/>
            <person name="Venter J.C."/>
            <person name="White O.R."/>
            <person name="Whitty B.R."/>
            <person name="Youngman P."/>
            <person name="Wolfe K.H."/>
            <person name="Goldman G.H."/>
            <person name="Wortman J.R."/>
            <person name="Jiang B."/>
            <person name="Denning D.W."/>
            <person name="Nierman W.C."/>
        </authorList>
    </citation>
    <scope>NUCLEOTIDE SEQUENCE [LARGE SCALE GENOMIC DNA]</scope>
    <source>
        <strain>CBS 144.89 / FGSC A1163 / CEA10</strain>
    </source>
</reference>
<reference key="2">
    <citation type="journal article" date="1992" name="J. Antibiot.">
        <title>Sphingofungins A, B, C, and D; a new family of antifungal agents. I. Fermentation, isolation, and biological activity.</title>
        <authorList>
            <person name="VanMiddlesworth F."/>
            <person name="Giacobbe R.A."/>
            <person name="Lopez M."/>
            <person name="Garrity G."/>
            <person name="Bland J.A."/>
            <person name="Bartizal K."/>
            <person name="Fromtling R.A."/>
            <person name="Polishook J."/>
            <person name="Zweerink M."/>
            <person name="Edison A.M."/>
        </authorList>
    </citation>
    <scope>BIOTECHNOLOGY</scope>
</reference>
<reference key="3">
    <citation type="journal article" date="2022" name="ACS Chem. Biol.">
        <title>Biosynthesis of the sphingolipid inhibitors sphingofungins in filamentous fungi requires aminomalonate as a metabolic precursor.</title>
        <authorList>
            <person name="Bissell A.U."/>
            <person name="Rautschek J."/>
            <person name="Hoefgen S."/>
            <person name="Raguz L."/>
            <person name="Mattern D.J."/>
            <person name="Saeed N."/>
            <person name="Janevska S."/>
            <person name="Jojic K."/>
            <person name="Huang Y."/>
            <person name="Kufs J.E."/>
            <person name="Herboeck B."/>
            <person name="Guo H."/>
            <person name="Hillmann F."/>
            <person name="Beemelmanns C."/>
            <person name="Valiante V."/>
        </authorList>
    </citation>
    <scope>FUNCTION</scope>
    <scope>INDUCTION</scope>
    <scope>DISRUPTION PHENOTYPE</scope>
</reference>
<evidence type="ECO:0000255" key="1"/>
<evidence type="ECO:0000255" key="2">
    <source>
        <dbReference type="PROSITE-ProRule" id="PRU00498"/>
    </source>
</evidence>
<evidence type="ECO:0000256" key="3">
    <source>
        <dbReference type="SAM" id="MobiDB-lite"/>
    </source>
</evidence>
<evidence type="ECO:0000269" key="4">
    <source>
    </source>
</evidence>
<evidence type="ECO:0000269" key="5">
    <source>
    </source>
</evidence>
<evidence type="ECO:0000303" key="6">
    <source>
    </source>
</evidence>
<evidence type="ECO:0000305" key="7"/>
<organism>
    <name type="scientific">Aspergillus fumigatus (strain CBS 144.89 / FGSC A1163 / CEA10)</name>
    <name type="common">Neosartorya fumigata</name>
    <dbReference type="NCBI Taxonomy" id="451804"/>
    <lineage>
        <taxon>Eukaryota</taxon>
        <taxon>Fungi</taxon>
        <taxon>Dikarya</taxon>
        <taxon>Ascomycota</taxon>
        <taxon>Pezizomycotina</taxon>
        <taxon>Eurotiomycetes</taxon>
        <taxon>Eurotiomycetidae</taxon>
        <taxon>Eurotiales</taxon>
        <taxon>Aspergillaceae</taxon>
        <taxon>Aspergillus</taxon>
        <taxon>Aspergillus subgen. Fumigati</taxon>
    </lineage>
</organism>
<dbReference type="EMBL" id="DS499596">
    <property type="protein sequence ID" value="EDP52286.1"/>
    <property type="molecule type" value="Genomic_DNA"/>
</dbReference>
<dbReference type="SMR" id="B0XZV4"/>
<dbReference type="EnsemblFungi" id="EDP52286">
    <property type="protein sequence ID" value="EDP52286"/>
    <property type="gene ID" value="AFUB_034500"/>
</dbReference>
<dbReference type="VEuPathDB" id="FungiDB:AFUB_034500"/>
<dbReference type="HOGENOM" id="CLU_000960_22_0_1"/>
<dbReference type="OrthoDB" id="108691at5052"/>
<dbReference type="PhylomeDB" id="B0XZV4"/>
<dbReference type="Proteomes" id="UP000001699">
    <property type="component" value="Unassembled WGS sequence"/>
</dbReference>
<dbReference type="GO" id="GO:0005886">
    <property type="term" value="C:plasma membrane"/>
    <property type="evidence" value="ECO:0007669"/>
    <property type="project" value="TreeGrafter"/>
</dbReference>
<dbReference type="GO" id="GO:0022857">
    <property type="term" value="F:transmembrane transporter activity"/>
    <property type="evidence" value="ECO:0007669"/>
    <property type="project" value="InterPro"/>
</dbReference>
<dbReference type="FunFam" id="1.20.1250.20:FF:000843">
    <property type="entry name" value="MFS transporter, putative"/>
    <property type="match status" value="1"/>
</dbReference>
<dbReference type="Gene3D" id="1.20.1720.10">
    <property type="entry name" value="Multidrug resistance protein D"/>
    <property type="match status" value="1"/>
</dbReference>
<dbReference type="InterPro" id="IPR011701">
    <property type="entry name" value="MFS"/>
</dbReference>
<dbReference type="InterPro" id="IPR020846">
    <property type="entry name" value="MFS_dom"/>
</dbReference>
<dbReference type="InterPro" id="IPR036259">
    <property type="entry name" value="MFS_trans_sf"/>
</dbReference>
<dbReference type="PANTHER" id="PTHR23501">
    <property type="entry name" value="MAJOR FACILITATOR SUPERFAMILY"/>
    <property type="match status" value="1"/>
</dbReference>
<dbReference type="PANTHER" id="PTHR23501:SF156">
    <property type="entry name" value="TRANSPORTER, PUTATIVE-RELATED"/>
    <property type="match status" value="1"/>
</dbReference>
<dbReference type="Pfam" id="PF07690">
    <property type="entry name" value="MFS_1"/>
    <property type="match status" value="1"/>
</dbReference>
<dbReference type="PRINTS" id="PR01036">
    <property type="entry name" value="TCRTETB"/>
</dbReference>
<dbReference type="SUPFAM" id="SSF103473">
    <property type="entry name" value="MFS general substrate transporter"/>
    <property type="match status" value="1"/>
</dbReference>
<dbReference type="PROSITE" id="PS50850">
    <property type="entry name" value="MFS"/>
    <property type="match status" value="1"/>
</dbReference>
<protein>
    <recommendedName>
        <fullName evidence="6">MFS-type transporter sphD</fullName>
    </recommendedName>
    <alternativeName>
        <fullName evidence="6">Sphingofungin biosynthesis cluster protein D</fullName>
    </alternativeName>
</protein>
<comment type="function">
    <text evidence="5">MFS-type transporter; part of the gene cluster that mediates the biosynthesis of sphingofungins, bioactive molecules acting as sphingolipid inhibitors via inhibiting serine palmitoyl transferase (SPT).</text>
</comment>
<comment type="subcellular location">
    <subcellularLocation>
        <location evidence="1">Membrane</location>
        <topology evidence="1">Multi-pass membrane protein</topology>
    </subcellularLocation>
</comment>
<comment type="induction">
    <text evidence="5">Expression is not regulated by the sphingofungins biosynthesis cluster-specific transcription factor sphG.</text>
</comment>
<comment type="disruption phenotype">
    <text evidence="5">Does not affect the production of sphingofungins.</text>
</comment>
<comment type="biotechnology">
    <text evidence="4">The sphingofungins A, B, C, and D, show a limited antifungal spectrum of activity but are especially effective against Cryptococcus species, fungal pathogens causing opportunistic infections in human.</text>
</comment>
<comment type="similarity">
    <text evidence="7">Belongs to the major facilitator superfamily.</text>
</comment>
<feature type="chain" id="PRO_0000461280" description="MFS-type transporter sphD">
    <location>
        <begin position="1"/>
        <end position="579"/>
    </location>
</feature>
<feature type="transmembrane region" description="Helical" evidence="1">
    <location>
        <begin position="73"/>
        <end position="93"/>
    </location>
</feature>
<feature type="transmembrane region" description="Helical" evidence="1">
    <location>
        <begin position="110"/>
        <end position="130"/>
    </location>
</feature>
<feature type="transmembrane region" description="Helical" evidence="1">
    <location>
        <begin position="138"/>
        <end position="158"/>
    </location>
</feature>
<feature type="transmembrane region" description="Helical" evidence="1">
    <location>
        <begin position="168"/>
        <end position="188"/>
    </location>
</feature>
<feature type="transmembrane region" description="Helical" evidence="1">
    <location>
        <begin position="200"/>
        <end position="220"/>
    </location>
</feature>
<feature type="transmembrane region" description="Helical" evidence="1">
    <location>
        <begin position="227"/>
        <end position="247"/>
    </location>
</feature>
<feature type="transmembrane region" description="Helical" evidence="1">
    <location>
        <begin position="267"/>
        <end position="287"/>
    </location>
</feature>
<feature type="transmembrane region" description="Helical" evidence="1">
    <location>
        <begin position="294"/>
        <end position="314"/>
    </location>
</feature>
<feature type="transmembrane region" description="Helical" evidence="1">
    <location>
        <begin position="338"/>
        <end position="358"/>
    </location>
</feature>
<feature type="transmembrane region" description="Helical" evidence="1">
    <location>
        <begin position="367"/>
        <end position="391"/>
    </location>
</feature>
<feature type="transmembrane region" description="Helical" evidence="1">
    <location>
        <begin position="398"/>
        <end position="419"/>
    </location>
</feature>
<feature type="transmembrane region" description="Helical" evidence="1">
    <location>
        <begin position="429"/>
        <end position="449"/>
    </location>
</feature>
<feature type="transmembrane region" description="Helical" evidence="1">
    <location>
        <begin position="460"/>
        <end position="480"/>
    </location>
</feature>
<feature type="transmembrane region" description="Helical" evidence="1">
    <location>
        <begin position="541"/>
        <end position="561"/>
    </location>
</feature>
<feature type="region of interest" description="Disordered" evidence="3">
    <location>
        <begin position="17"/>
        <end position="62"/>
    </location>
</feature>
<feature type="compositionally biased region" description="Basic and acidic residues" evidence="3">
    <location>
        <begin position="51"/>
        <end position="62"/>
    </location>
</feature>
<feature type="glycosylation site" description="N-linked (GlcNAc...) asparagine" evidence="2">
    <location>
        <position position="335"/>
    </location>
</feature>
<name>SPHD_ASPFC</name>
<keyword id="KW-0325">Glycoprotein</keyword>
<keyword id="KW-0472">Membrane</keyword>
<keyword id="KW-0812">Transmembrane</keyword>
<keyword id="KW-1133">Transmembrane helix</keyword>
<keyword id="KW-0813">Transport</keyword>
<sequence>MGQAEFNARTDASAEISAFAVRAEPDSEPVSEKQGTAETDAETGAGGTEVPAERNGEDDVERTPKKSLSFKLAFIGLAASMFVFQVDATALGIALPTIAADLKGESLESFWANLSYTLCGLVMQPVWASISTAFGRKPPLYVSMALFFIGSIVFAVAQNMNTIIVGRVLQGFGGGGIDVLAEVILADMTTLEERSKYLGLMAIPMAIGNIMGPSVGALFATYASWRWIGWVNLPLLGIGTPLVFFFLKLRPVPLDASLAKNLNRLDWIGMVLVVVGITIFVLPLSWAGSLFPWGAWQTLVPLFLGVAVLVIFAFYEARPDAPIVPHRLFHSKTGNMTLVGGFLHGAVLVSLLQYLPLIYQAVQLETAILSAVSLLPTVIISVVVAAISMMLVPWFGGYVWILRLAWVILTLGTGLLALFDVGSSSSMRLGLPILWGAGVALLRLNLLPMQASVKNVDDTGLAIGQFLTIRMFGGLVGLTISATIFNSVFSTSISATAVHLTGPLAPLKDVANAVAFIDKLRSIDVPVETRDQVLRVYLKCFQTIFYTMTGLSGLGLVTSLFVDEIDLKSQGLGNQRFEE</sequence>
<proteinExistence type="evidence at protein level"/>